<proteinExistence type="evidence at transcript level"/>
<name>FBL70_ARATH</name>
<protein>
    <recommendedName>
        <fullName>F-box/LRR-repeat protein At3g62440</fullName>
    </recommendedName>
</protein>
<gene>
    <name type="ordered locus">At3g62440</name>
    <name type="ORF">T12C14.140</name>
</gene>
<reference key="1">
    <citation type="journal article" date="2000" name="Nature">
        <title>Sequence and analysis of chromosome 3 of the plant Arabidopsis thaliana.</title>
        <authorList>
            <person name="Salanoubat M."/>
            <person name="Lemcke K."/>
            <person name="Rieger M."/>
            <person name="Ansorge W."/>
            <person name="Unseld M."/>
            <person name="Fartmann B."/>
            <person name="Valle G."/>
            <person name="Bloecker H."/>
            <person name="Perez-Alonso M."/>
            <person name="Obermaier B."/>
            <person name="Delseny M."/>
            <person name="Boutry M."/>
            <person name="Grivell L.A."/>
            <person name="Mache R."/>
            <person name="Puigdomenech P."/>
            <person name="De Simone V."/>
            <person name="Choisne N."/>
            <person name="Artiguenave F."/>
            <person name="Robert C."/>
            <person name="Brottier P."/>
            <person name="Wincker P."/>
            <person name="Cattolico L."/>
            <person name="Weissenbach J."/>
            <person name="Saurin W."/>
            <person name="Quetier F."/>
            <person name="Schaefer M."/>
            <person name="Mueller-Auer S."/>
            <person name="Gabel C."/>
            <person name="Fuchs M."/>
            <person name="Benes V."/>
            <person name="Wurmbach E."/>
            <person name="Drzonek H."/>
            <person name="Erfle H."/>
            <person name="Jordan N."/>
            <person name="Bangert S."/>
            <person name="Wiedelmann R."/>
            <person name="Kranz H."/>
            <person name="Voss H."/>
            <person name="Holland R."/>
            <person name="Brandt P."/>
            <person name="Nyakatura G."/>
            <person name="Vezzi A."/>
            <person name="D'Angelo M."/>
            <person name="Pallavicini A."/>
            <person name="Toppo S."/>
            <person name="Simionati B."/>
            <person name="Conrad A."/>
            <person name="Hornischer K."/>
            <person name="Kauer G."/>
            <person name="Loehnert T.-H."/>
            <person name="Nordsiek G."/>
            <person name="Reichelt J."/>
            <person name="Scharfe M."/>
            <person name="Schoen O."/>
            <person name="Bargues M."/>
            <person name="Terol J."/>
            <person name="Climent J."/>
            <person name="Navarro P."/>
            <person name="Collado C."/>
            <person name="Perez-Perez A."/>
            <person name="Ottenwaelder B."/>
            <person name="Duchemin D."/>
            <person name="Cooke R."/>
            <person name="Laudie M."/>
            <person name="Berger-Llauro C."/>
            <person name="Purnelle B."/>
            <person name="Masuy D."/>
            <person name="de Haan M."/>
            <person name="Maarse A.C."/>
            <person name="Alcaraz J.-P."/>
            <person name="Cottet A."/>
            <person name="Casacuberta E."/>
            <person name="Monfort A."/>
            <person name="Argiriou A."/>
            <person name="Flores M."/>
            <person name="Liguori R."/>
            <person name="Vitale D."/>
            <person name="Mannhaupt G."/>
            <person name="Haase D."/>
            <person name="Schoof H."/>
            <person name="Rudd S."/>
            <person name="Zaccaria P."/>
            <person name="Mewes H.-W."/>
            <person name="Mayer K.F.X."/>
            <person name="Kaul S."/>
            <person name="Town C.D."/>
            <person name="Koo H.L."/>
            <person name="Tallon L.J."/>
            <person name="Jenkins J."/>
            <person name="Rooney T."/>
            <person name="Rizzo M."/>
            <person name="Walts A."/>
            <person name="Utterback T."/>
            <person name="Fujii C.Y."/>
            <person name="Shea T.P."/>
            <person name="Creasy T.H."/>
            <person name="Haas B."/>
            <person name="Maiti R."/>
            <person name="Wu D."/>
            <person name="Peterson J."/>
            <person name="Van Aken S."/>
            <person name="Pai G."/>
            <person name="Militscher J."/>
            <person name="Sellers P."/>
            <person name="Gill J.E."/>
            <person name="Feldblyum T.V."/>
            <person name="Preuss D."/>
            <person name="Lin X."/>
            <person name="Nierman W.C."/>
            <person name="Salzberg S.L."/>
            <person name="White O."/>
            <person name="Venter J.C."/>
            <person name="Fraser C.M."/>
            <person name="Kaneko T."/>
            <person name="Nakamura Y."/>
            <person name="Sato S."/>
            <person name="Kato T."/>
            <person name="Asamizu E."/>
            <person name="Sasamoto S."/>
            <person name="Kimura T."/>
            <person name="Idesawa K."/>
            <person name="Kawashima K."/>
            <person name="Kishida Y."/>
            <person name="Kiyokawa C."/>
            <person name="Kohara M."/>
            <person name="Matsumoto M."/>
            <person name="Matsuno A."/>
            <person name="Muraki A."/>
            <person name="Nakayama S."/>
            <person name="Nakazaki N."/>
            <person name="Shinpo S."/>
            <person name="Takeuchi C."/>
            <person name="Wada T."/>
            <person name="Watanabe A."/>
            <person name="Yamada M."/>
            <person name="Yasuda M."/>
            <person name="Tabata S."/>
        </authorList>
    </citation>
    <scope>NUCLEOTIDE SEQUENCE [LARGE SCALE GENOMIC DNA]</scope>
    <source>
        <strain>cv. Columbia</strain>
    </source>
</reference>
<reference key="2">
    <citation type="journal article" date="2017" name="Plant J.">
        <title>Araport11: a complete reannotation of the Arabidopsis thaliana reference genome.</title>
        <authorList>
            <person name="Cheng C.Y."/>
            <person name="Krishnakumar V."/>
            <person name="Chan A.P."/>
            <person name="Thibaud-Nissen F."/>
            <person name="Schobel S."/>
            <person name="Town C.D."/>
        </authorList>
    </citation>
    <scope>GENOME REANNOTATION</scope>
    <source>
        <strain>cv. Columbia</strain>
    </source>
</reference>
<reference key="3">
    <citation type="submission" date="2005-05" db="EMBL/GenBank/DDBJ databases">
        <authorList>
            <person name="Underwood B.A."/>
            <person name="Xiao Y.-L."/>
            <person name="Moskal W.A. Jr."/>
            <person name="Monaghan E.L."/>
            <person name="Wang W."/>
            <person name="Redman J.C."/>
            <person name="Wu H.C."/>
            <person name="Utterback T."/>
            <person name="Town C.D."/>
        </authorList>
    </citation>
    <scope>NUCLEOTIDE SEQUENCE [LARGE SCALE MRNA]</scope>
    <source>
        <strain>cv. Columbia</strain>
    </source>
</reference>
<accession>Q9LZP6</accession>
<keyword id="KW-0433">Leucine-rich repeat</keyword>
<keyword id="KW-1185">Reference proteome</keyword>
<keyword id="KW-0677">Repeat</keyword>
<sequence>MDRISNLPDEIICHIGSFLSAREAAFTTVLSKRWHNLFTIVPDLHFDSSVKDGESLTDFVDRVMALPASSRVNKLSLKWWFDEDTDSAQFDEDTEPEDTEPAQFDQINRSLRVVLKRGVADFYLWVHGKQGYTLPFEVFTCETVTKLSLGSGFAIDFLPENALLPALKTLSLYHVRFYEFGRCAFKTLLASSPVLEELTVCGVNWELWKWSRTVSSSSLKRLTIMRKQWDAFDDSDFKSISFDTPSLAYLYYSDYVPKEYLSVNLDSLVETKLYLCPEENYMWGKGDEKRFNPINLLHGLKNVETLNLYTIMTAEMFYVFREALPVFQKLSHLSVNLSNFCWSSMPMLIKKAPNLKTLNIDGPLHYESYYRCAGDIFCECVSEYSFLVSCPLEVLKITEYYGSFRELMQMKHFLEKLSCLELVEVHSQATGERKLKLIADLERLPRASSKCKFEVVS</sequence>
<feature type="chain" id="PRO_0000281970" description="F-box/LRR-repeat protein At3g62440">
    <location>
        <begin position="1"/>
        <end position="457"/>
    </location>
</feature>
<feature type="domain" description="F-box">
    <location>
        <begin position="1"/>
        <end position="49"/>
    </location>
</feature>
<feature type="repeat" description="LRR 1">
    <location>
        <begin position="53"/>
        <end position="79"/>
    </location>
</feature>
<feature type="repeat" description="LRR 2">
    <location>
        <begin position="147"/>
        <end position="174"/>
    </location>
</feature>
<feature type="repeat" description="LRR 3">
    <location>
        <begin position="177"/>
        <end position="202"/>
    </location>
</feature>
<feature type="repeat" description="LRR 4">
    <location>
        <begin position="229"/>
        <end position="254"/>
    </location>
</feature>
<feature type="repeat" description="LRR 5">
    <location>
        <begin position="283"/>
        <end position="310"/>
    </location>
</feature>
<feature type="repeat" description="LRR 6">
    <location>
        <begin position="337"/>
        <end position="362"/>
    </location>
</feature>
<dbReference type="EMBL" id="AL162507">
    <property type="protein sequence ID" value="CAB82958.1"/>
    <property type="molecule type" value="Genomic_DNA"/>
</dbReference>
<dbReference type="EMBL" id="CP002686">
    <property type="protein sequence ID" value="AEE80353.1"/>
    <property type="molecule type" value="Genomic_DNA"/>
</dbReference>
<dbReference type="EMBL" id="DQ056632">
    <property type="protein sequence ID" value="AAY78780.1"/>
    <property type="molecule type" value="mRNA"/>
</dbReference>
<dbReference type="PIR" id="T48036">
    <property type="entry name" value="T48036"/>
</dbReference>
<dbReference type="BioGRID" id="10731">
    <property type="interactions" value="1"/>
</dbReference>
<dbReference type="STRING" id="3702.Q9LZP6"/>
<dbReference type="iPTMnet" id="Q9LZP6"/>
<dbReference type="PaxDb" id="3702-AT3G62440.1"/>
<dbReference type="EnsemblPlants" id="AT3G62440.1">
    <property type="protein sequence ID" value="AT3G62440.1"/>
    <property type="gene ID" value="AT3G62440"/>
</dbReference>
<dbReference type="Gramene" id="AT3G62440.1">
    <property type="protein sequence ID" value="AT3G62440.1"/>
    <property type="gene ID" value="AT3G62440"/>
</dbReference>
<dbReference type="KEGG" id="ath:AT3G62440"/>
<dbReference type="Araport" id="AT3G62440"/>
<dbReference type="TAIR" id="AT3G62440">
    <property type="gene designation" value="SAF1"/>
</dbReference>
<dbReference type="HOGENOM" id="CLU_010721_7_1_1"/>
<dbReference type="InParanoid" id="Q9LZP6"/>
<dbReference type="OMA" id="KITEYYG"/>
<dbReference type="PhylomeDB" id="Q9LZP6"/>
<dbReference type="PRO" id="PR:Q9LZP6"/>
<dbReference type="Proteomes" id="UP000006548">
    <property type="component" value="Chromosome 3"/>
</dbReference>
<dbReference type="ExpressionAtlas" id="Q9LZP6">
    <property type="expression patterns" value="baseline and differential"/>
</dbReference>
<dbReference type="GO" id="GO:0009901">
    <property type="term" value="P:anther dehiscence"/>
    <property type="evidence" value="ECO:0000315"/>
    <property type="project" value="TAIR"/>
</dbReference>
<dbReference type="CDD" id="cd22160">
    <property type="entry name" value="F-box_AtFBL13-like"/>
    <property type="match status" value="1"/>
</dbReference>
<dbReference type="Gene3D" id="1.20.1280.50">
    <property type="match status" value="1"/>
</dbReference>
<dbReference type="Gene3D" id="3.80.10.10">
    <property type="entry name" value="Ribonuclease Inhibitor"/>
    <property type="match status" value="1"/>
</dbReference>
<dbReference type="InterPro" id="IPR036047">
    <property type="entry name" value="F-box-like_dom_sf"/>
</dbReference>
<dbReference type="InterPro" id="IPR053781">
    <property type="entry name" value="F-box_AtFBL13-like"/>
</dbReference>
<dbReference type="InterPro" id="IPR001810">
    <property type="entry name" value="F-box_dom"/>
</dbReference>
<dbReference type="InterPro" id="IPR006566">
    <property type="entry name" value="FBD"/>
</dbReference>
<dbReference type="InterPro" id="IPR055294">
    <property type="entry name" value="FBL60-like"/>
</dbReference>
<dbReference type="InterPro" id="IPR032675">
    <property type="entry name" value="LRR_dom_sf"/>
</dbReference>
<dbReference type="InterPro" id="IPR055411">
    <property type="entry name" value="LRR_FXL15/At3g58940/PEG3-like"/>
</dbReference>
<dbReference type="PANTHER" id="PTHR31293">
    <property type="entry name" value="RNI-LIKE SUPERFAMILY PROTEIN"/>
    <property type="match status" value="1"/>
</dbReference>
<dbReference type="PANTHER" id="PTHR31293:SF12">
    <property type="entry name" value="RNI-LIKE SUPERFAMILY PROTEIN"/>
    <property type="match status" value="1"/>
</dbReference>
<dbReference type="Pfam" id="PF00646">
    <property type="entry name" value="F-box"/>
    <property type="match status" value="1"/>
</dbReference>
<dbReference type="Pfam" id="PF24758">
    <property type="entry name" value="LRR_At5g56370"/>
    <property type="match status" value="1"/>
</dbReference>
<dbReference type="SMART" id="SM00579">
    <property type="entry name" value="FBD"/>
    <property type="match status" value="1"/>
</dbReference>
<dbReference type="SUPFAM" id="SSF81383">
    <property type="entry name" value="F-box domain"/>
    <property type="match status" value="1"/>
</dbReference>
<dbReference type="SUPFAM" id="SSF52047">
    <property type="entry name" value="RNI-like"/>
    <property type="match status" value="1"/>
</dbReference>
<organism>
    <name type="scientific">Arabidopsis thaliana</name>
    <name type="common">Mouse-ear cress</name>
    <dbReference type="NCBI Taxonomy" id="3702"/>
    <lineage>
        <taxon>Eukaryota</taxon>
        <taxon>Viridiplantae</taxon>
        <taxon>Streptophyta</taxon>
        <taxon>Embryophyta</taxon>
        <taxon>Tracheophyta</taxon>
        <taxon>Spermatophyta</taxon>
        <taxon>Magnoliopsida</taxon>
        <taxon>eudicotyledons</taxon>
        <taxon>Gunneridae</taxon>
        <taxon>Pentapetalae</taxon>
        <taxon>rosids</taxon>
        <taxon>malvids</taxon>
        <taxon>Brassicales</taxon>
        <taxon>Brassicaceae</taxon>
        <taxon>Camelineae</taxon>
        <taxon>Arabidopsis</taxon>
    </lineage>
</organism>